<sequence>MDVMKYNDLRDFLTLLEQQGELKRITLPVDPHLEITEIADRTLRAGGPALLFENPKGYSMPVLCNLFGTPKRVAMGMGQEDVSALREVGKLLAFLKEPEPPKGFRDLFDKLPQFKQVLNMPTKRLRGAPCQQKIVSGDDVDLHRIPIMTCWPGDAAPLITWGLTVTRRPHKERQNLGIYRQQLIGKNKLIMRWLSHRGGALDYQEWCAAHPGERFPVSVALGADPATILGAVTPVPDTLSEYAFAGLLRGTKTEVVKCISNDLEVPASAEIVLEGYIEQGETAPEGPYGDHTGYYNEVDSFPVFTVTHITQREDAIYHSTYTGRPPDEPAVLGVALNEVFVPILQKQFPEIVDFYLPPEGCSYRLAVVTIKKQYAGHAKRVMMGVWSFLRQFMYTKFVIVCDDDVNARDWNDVIWAITTRMDPARDTVLVENTPIDYLDFASPVSGLGSKMGLDATNKWPGETQREWGRPIKKDPDVVAHIDAIWDELAIFNNGKSA</sequence>
<reference key="1">
    <citation type="journal article" date="2005" name="Nucleic Acids Res.">
        <title>Genome dynamics and diversity of Shigella species, the etiologic agents of bacillary dysentery.</title>
        <authorList>
            <person name="Yang F."/>
            <person name="Yang J."/>
            <person name="Zhang X."/>
            <person name="Chen L."/>
            <person name="Jiang Y."/>
            <person name="Yan Y."/>
            <person name="Tang X."/>
            <person name="Wang J."/>
            <person name="Xiong Z."/>
            <person name="Dong J."/>
            <person name="Xue Y."/>
            <person name="Zhu Y."/>
            <person name="Xu X."/>
            <person name="Sun L."/>
            <person name="Chen S."/>
            <person name="Nie H."/>
            <person name="Peng J."/>
            <person name="Xu J."/>
            <person name="Wang Y."/>
            <person name="Yuan Z."/>
            <person name="Wen Y."/>
            <person name="Yao Z."/>
            <person name="Shen Y."/>
            <person name="Qiang B."/>
            <person name="Hou Y."/>
            <person name="Yu J."/>
            <person name="Jin Q."/>
        </authorList>
    </citation>
    <scope>NUCLEOTIDE SEQUENCE [LARGE SCALE GENOMIC DNA]</scope>
    <source>
        <strain>Sd197</strain>
    </source>
</reference>
<gene>
    <name evidence="1" type="primary">ubiD</name>
    <name type="ordered locus">SDY_3902</name>
</gene>
<accession>Q32A18</accession>
<proteinExistence type="inferred from homology"/>
<organism>
    <name type="scientific">Shigella dysenteriae serotype 1 (strain Sd197)</name>
    <dbReference type="NCBI Taxonomy" id="300267"/>
    <lineage>
        <taxon>Bacteria</taxon>
        <taxon>Pseudomonadati</taxon>
        <taxon>Pseudomonadota</taxon>
        <taxon>Gammaproteobacteria</taxon>
        <taxon>Enterobacterales</taxon>
        <taxon>Enterobacteriaceae</taxon>
        <taxon>Shigella</taxon>
    </lineage>
</organism>
<evidence type="ECO:0000255" key="1">
    <source>
        <dbReference type="HAMAP-Rule" id="MF_01636"/>
    </source>
</evidence>
<feature type="chain" id="PRO_0000267700" description="3-octaprenyl-4-hydroxybenzoate carboxy-lyase">
    <location>
        <begin position="1"/>
        <end position="497"/>
    </location>
</feature>
<feature type="active site" description="Proton donor" evidence="1">
    <location>
        <position position="290"/>
    </location>
</feature>
<feature type="binding site" evidence="1">
    <location>
        <position position="175"/>
    </location>
    <ligand>
        <name>Mn(2+)</name>
        <dbReference type="ChEBI" id="CHEBI:29035"/>
    </ligand>
</feature>
<feature type="binding site" evidence="1">
    <location>
        <begin position="178"/>
        <end position="180"/>
    </location>
    <ligand>
        <name>prenylated FMN</name>
        <dbReference type="ChEBI" id="CHEBI:87746"/>
    </ligand>
</feature>
<feature type="binding site" evidence="1">
    <location>
        <begin position="192"/>
        <end position="194"/>
    </location>
    <ligand>
        <name>prenylated FMN</name>
        <dbReference type="ChEBI" id="CHEBI:87746"/>
    </ligand>
</feature>
<feature type="binding site" evidence="1">
    <location>
        <begin position="197"/>
        <end position="198"/>
    </location>
    <ligand>
        <name>prenylated FMN</name>
        <dbReference type="ChEBI" id="CHEBI:87746"/>
    </ligand>
</feature>
<feature type="binding site" evidence="1">
    <location>
        <position position="241"/>
    </location>
    <ligand>
        <name>Mn(2+)</name>
        <dbReference type="ChEBI" id="CHEBI:29035"/>
    </ligand>
</feature>
<comment type="function">
    <text evidence="1">Catalyzes the decarboxylation of 3-octaprenyl-4-hydroxy benzoate to 2-octaprenylphenol, an intermediate step in ubiquinone biosynthesis.</text>
</comment>
<comment type="catalytic activity">
    <reaction evidence="1">
        <text>a 4-hydroxy-3-(all-trans-polyprenyl)benzoate + H(+) = a 2-(all-trans-polyprenyl)phenol + CO2</text>
        <dbReference type="Rhea" id="RHEA:41680"/>
        <dbReference type="Rhea" id="RHEA-COMP:9514"/>
        <dbReference type="Rhea" id="RHEA-COMP:9516"/>
        <dbReference type="ChEBI" id="CHEBI:1269"/>
        <dbReference type="ChEBI" id="CHEBI:15378"/>
        <dbReference type="ChEBI" id="CHEBI:16526"/>
        <dbReference type="ChEBI" id="CHEBI:78396"/>
        <dbReference type="EC" id="4.1.1.98"/>
    </reaction>
</comment>
<comment type="cofactor">
    <cofactor evidence="1">
        <name>prenylated FMN</name>
        <dbReference type="ChEBI" id="CHEBI:87746"/>
    </cofactor>
    <text evidence="1">Binds 1 prenylated FMN per subunit.</text>
</comment>
<comment type="cofactor">
    <cofactor evidence="1">
        <name>Mn(2+)</name>
        <dbReference type="ChEBI" id="CHEBI:29035"/>
    </cofactor>
</comment>
<comment type="pathway">
    <text evidence="1">Cofactor biosynthesis; ubiquinone biosynthesis.</text>
</comment>
<comment type="subunit">
    <text evidence="1">Homohexamer.</text>
</comment>
<comment type="subcellular location">
    <subcellularLocation>
        <location evidence="1">Cell membrane</location>
        <topology evidence="1">Peripheral membrane protein</topology>
    </subcellularLocation>
</comment>
<comment type="similarity">
    <text evidence="1">Belongs to the UbiD family.</text>
</comment>
<keyword id="KW-1003">Cell membrane</keyword>
<keyword id="KW-0210">Decarboxylase</keyword>
<keyword id="KW-0285">Flavoprotein</keyword>
<keyword id="KW-0288">FMN</keyword>
<keyword id="KW-0456">Lyase</keyword>
<keyword id="KW-0464">Manganese</keyword>
<keyword id="KW-0472">Membrane</keyword>
<keyword id="KW-0479">Metal-binding</keyword>
<keyword id="KW-1185">Reference proteome</keyword>
<keyword id="KW-0831">Ubiquinone biosynthesis</keyword>
<protein>
    <recommendedName>
        <fullName evidence="1">3-octaprenyl-4-hydroxybenzoate carboxy-lyase</fullName>
        <ecNumber evidence="1">4.1.1.98</ecNumber>
    </recommendedName>
    <alternativeName>
        <fullName evidence="1">Polyprenyl p-hydroxybenzoate decarboxylase</fullName>
    </alternativeName>
</protein>
<name>UBID_SHIDS</name>
<dbReference type="EC" id="4.1.1.98" evidence="1"/>
<dbReference type="EMBL" id="CP000034">
    <property type="protein sequence ID" value="ABB63837.1"/>
    <property type="molecule type" value="Genomic_DNA"/>
</dbReference>
<dbReference type="RefSeq" id="WP_000382918.1">
    <property type="nucleotide sequence ID" value="NC_007606.1"/>
</dbReference>
<dbReference type="RefSeq" id="YP_405328.1">
    <property type="nucleotide sequence ID" value="NC_007606.1"/>
</dbReference>
<dbReference type="SMR" id="Q32A18"/>
<dbReference type="STRING" id="300267.SDY_3902"/>
<dbReference type="EnsemblBacteria" id="ABB63837">
    <property type="protein sequence ID" value="ABB63837"/>
    <property type="gene ID" value="SDY_3902"/>
</dbReference>
<dbReference type="KEGG" id="sdy:SDY_3902"/>
<dbReference type="PATRIC" id="fig|300267.13.peg.4610"/>
<dbReference type="HOGENOM" id="CLU_023348_4_1_6"/>
<dbReference type="UniPathway" id="UPA00232"/>
<dbReference type="Proteomes" id="UP000002716">
    <property type="component" value="Chromosome"/>
</dbReference>
<dbReference type="GO" id="GO:0005829">
    <property type="term" value="C:cytosol"/>
    <property type="evidence" value="ECO:0007669"/>
    <property type="project" value="TreeGrafter"/>
</dbReference>
<dbReference type="GO" id="GO:0005886">
    <property type="term" value="C:plasma membrane"/>
    <property type="evidence" value="ECO:0007669"/>
    <property type="project" value="UniProtKB-SubCell"/>
</dbReference>
<dbReference type="GO" id="GO:0008694">
    <property type="term" value="F:3-octaprenyl-4-hydroxybenzoate carboxy-lyase activity"/>
    <property type="evidence" value="ECO:0007669"/>
    <property type="project" value="UniProtKB-UniRule"/>
</dbReference>
<dbReference type="GO" id="GO:0046872">
    <property type="term" value="F:metal ion binding"/>
    <property type="evidence" value="ECO:0007669"/>
    <property type="project" value="UniProtKB-KW"/>
</dbReference>
<dbReference type="GO" id="GO:0006744">
    <property type="term" value="P:ubiquinone biosynthetic process"/>
    <property type="evidence" value="ECO:0007669"/>
    <property type="project" value="UniProtKB-UniRule"/>
</dbReference>
<dbReference type="FunFam" id="1.20.5.570:FF:000001">
    <property type="entry name" value="3-octaprenyl-4-hydroxybenzoate carboxy-lyase"/>
    <property type="match status" value="1"/>
</dbReference>
<dbReference type="FunFam" id="3.40.1670.10:FF:000001">
    <property type="entry name" value="3-octaprenyl-4-hydroxybenzoate carboxy-lyase"/>
    <property type="match status" value="1"/>
</dbReference>
<dbReference type="Gene3D" id="1.20.5.570">
    <property type="entry name" value="Single helix bin"/>
    <property type="match status" value="1"/>
</dbReference>
<dbReference type="Gene3D" id="3.40.1670.10">
    <property type="entry name" value="UbiD C-terminal domain-like"/>
    <property type="match status" value="1"/>
</dbReference>
<dbReference type="HAMAP" id="MF_01636">
    <property type="entry name" value="UbiD"/>
    <property type="match status" value="1"/>
</dbReference>
<dbReference type="InterPro" id="IPR002830">
    <property type="entry name" value="UbiD"/>
</dbReference>
<dbReference type="InterPro" id="IPR049381">
    <property type="entry name" value="UbiD-like_C"/>
</dbReference>
<dbReference type="InterPro" id="IPR049383">
    <property type="entry name" value="UbiD-like_N"/>
</dbReference>
<dbReference type="InterPro" id="IPR023677">
    <property type="entry name" value="UbiD_bacteria"/>
</dbReference>
<dbReference type="InterPro" id="IPR048304">
    <property type="entry name" value="UbiD_Rift_dom"/>
</dbReference>
<dbReference type="NCBIfam" id="NF008175">
    <property type="entry name" value="PRK10922.1"/>
    <property type="match status" value="1"/>
</dbReference>
<dbReference type="NCBIfam" id="TIGR00148">
    <property type="entry name" value="UbiD family decarboxylase"/>
    <property type="match status" value="1"/>
</dbReference>
<dbReference type="PANTHER" id="PTHR30108">
    <property type="entry name" value="3-OCTAPRENYL-4-HYDROXYBENZOATE CARBOXY-LYASE-RELATED"/>
    <property type="match status" value="1"/>
</dbReference>
<dbReference type="PANTHER" id="PTHR30108:SF17">
    <property type="entry name" value="FERULIC ACID DECARBOXYLASE 1"/>
    <property type="match status" value="1"/>
</dbReference>
<dbReference type="Pfam" id="PF01977">
    <property type="entry name" value="UbiD"/>
    <property type="match status" value="1"/>
</dbReference>
<dbReference type="Pfam" id="PF20696">
    <property type="entry name" value="UbiD_C"/>
    <property type="match status" value="1"/>
</dbReference>
<dbReference type="Pfam" id="PF20695">
    <property type="entry name" value="UbiD_N"/>
    <property type="match status" value="1"/>
</dbReference>
<dbReference type="SUPFAM" id="SSF50475">
    <property type="entry name" value="FMN-binding split barrel"/>
    <property type="match status" value="1"/>
</dbReference>
<dbReference type="SUPFAM" id="SSF143968">
    <property type="entry name" value="UbiD C-terminal domain-like"/>
    <property type="match status" value="1"/>
</dbReference>